<gene>
    <name evidence="1" type="primary">coaE</name>
    <name type="ordered locus">XOO1583</name>
</gene>
<proteinExistence type="inferred from homology"/>
<organism>
    <name type="scientific">Xanthomonas oryzae pv. oryzae (strain KACC10331 / KXO85)</name>
    <dbReference type="NCBI Taxonomy" id="291331"/>
    <lineage>
        <taxon>Bacteria</taxon>
        <taxon>Pseudomonadati</taxon>
        <taxon>Pseudomonadota</taxon>
        <taxon>Gammaproteobacteria</taxon>
        <taxon>Lysobacterales</taxon>
        <taxon>Lysobacteraceae</taxon>
        <taxon>Xanthomonas</taxon>
    </lineage>
</organism>
<accession>Q5H2I4</accession>
<protein>
    <recommendedName>
        <fullName evidence="1">Dephospho-CoA kinase</fullName>
        <ecNumber evidence="1">2.7.1.24</ecNumber>
    </recommendedName>
    <alternativeName>
        <fullName evidence="1">Dephosphocoenzyme A kinase</fullName>
    </alternativeName>
</protein>
<keyword id="KW-0067">ATP-binding</keyword>
<keyword id="KW-0173">Coenzyme A biosynthesis</keyword>
<keyword id="KW-0963">Cytoplasm</keyword>
<keyword id="KW-0418">Kinase</keyword>
<keyword id="KW-0547">Nucleotide-binding</keyword>
<keyword id="KW-1185">Reference proteome</keyword>
<keyword id="KW-0808">Transferase</keyword>
<feature type="chain" id="PRO_0000243366" description="Dephospho-CoA kinase">
    <location>
        <begin position="1"/>
        <end position="202"/>
    </location>
</feature>
<feature type="domain" description="DPCK" evidence="1">
    <location>
        <begin position="5"/>
        <end position="202"/>
    </location>
</feature>
<feature type="binding site" evidence="1">
    <location>
        <begin position="13"/>
        <end position="18"/>
    </location>
    <ligand>
        <name>ATP</name>
        <dbReference type="ChEBI" id="CHEBI:30616"/>
    </ligand>
</feature>
<sequence length="202" mass="21711">MSDFIVGLTGGIASGKSALAAEFEKLGVPVVDADLVARQVVAPGPVLDAIVAQFGAEVLLTDGTLDRQTLRQRVFADTAQRRVLEAITHPAIRSELQRAALAALAPYAIVAIPLLTEAGGRAGYPWLDRILVVDVPVALQHQRLMQRDAATAELADRMIAAQATREQRLAIADDVVCNDGVLEQLTQATHRLDADYRARSDR</sequence>
<name>COAE_XANOR</name>
<reference key="1">
    <citation type="journal article" date="2005" name="Nucleic Acids Res.">
        <title>The genome sequence of Xanthomonas oryzae pathovar oryzae KACC10331, the bacterial blight pathogen of rice.</title>
        <authorList>
            <person name="Lee B.-M."/>
            <person name="Park Y.-J."/>
            <person name="Park D.-S."/>
            <person name="Kang H.-W."/>
            <person name="Kim J.-G."/>
            <person name="Song E.-S."/>
            <person name="Park I.-C."/>
            <person name="Yoon U.-H."/>
            <person name="Hahn J.-H."/>
            <person name="Koo B.-S."/>
            <person name="Lee G.-B."/>
            <person name="Kim H."/>
            <person name="Park H.-S."/>
            <person name="Yoon K.-O."/>
            <person name="Kim J.-H."/>
            <person name="Jung C.-H."/>
            <person name="Koh N.-H."/>
            <person name="Seo J.-S."/>
            <person name="Go S.-J."/>
        </authorList>
    </citation>
    <scope>NUCLEOTIDE SEQUENCE [LARGE SCALE GENOMIC DNA]</scope>
    <source>
        <strain>KACC10331 / KXO85</strain>
    </source>
</reference>
<evidence type="ECO:0000255" key="1">
    <source>
        <dbReference type="HAMAP-Rule" id="MF_00376"/>
    </source>
</evidence>
<comment type="function">
    <text evidence="1">Catalyzes the phosphorylation of the 3'-hydroxyl group of dephosphocoenzyme A to form coenzyme A.</text>
</comment>
<comment type="catalytic activity">
    <reaction evidence="1">
        <text>3'-dephospho-CoA + ATP = ADP + CoA + H(+)</text>
        <dbReference type="Rhea" id="RHEA:18245"/>
        <dbReference type="ChEBI" id="CHEBI:15378"/>
        <dbReference type="ChEBI" id="CHEBI:30616"/>
        <dbReference type="ChEBI" id="CHEBI:57287"/>
        <dbReference type="ChEBI" id="CHEBI:57328"/>
        <dbReference type="ChEBI" id="CHEBI:456216"/>
        <dbReference type="EC" id="2.7.1.24"/>
    </reaction>
</comment>
<comment type="pathway">
    <text evidence="1">Cofactor biosynthesis; coenzyme A biosynthesis; CoA from (R)-pantothenate: step 5/5.</text>
</comment>
<comment type="subcellular location">
    <subcellularLocation>
        <location evidence="1">Cytoplasm</location>
    </subcellularLocation>
</comment>
<comment type="similarity">
    <text evidence="1">Belongs to the CoaE family.</text>
</comment>
<dbReference type="EC" id="2.7.1.24" evidence="1"/>
<dbReference type="EMBL" id="AE013598">
    <property type="protein sequence ID" value="AAW74837.1"/>
    <property type="molecule type" value="Genomic_DNA"/>
</dbReference>
<dbReference type="SMR" id="Q5H2I4"/>
<dbReference type="STRING" id="291331.XOO1583"/>
<dbReference type="KEGG" id="xoo:XOO1583"/>
<dbReference type="HOGENOM" id="CLU_057180_1_2_6"/>
<dbReference type="UniPathway" id="UPA00241">
    <property type="reaction ID" value="UER00356"/>
</dbReference>
<dbReference type="Proteomes" id="UP000006735">
    <property type="component" value="Chromosome"/>
</dbReference>
<dbReference type="GO" id="GO:0005737">
    <property type="term" value="C:cytoplasm"/>
    <property type="evidence" value="ECO:0007669"/>
    <property type="project" value="UniProtKB-SubCell"/>
</dbReference>
<dbReference type="GO" id="GO:0005524">
    <property type="term" value="F:ATP binding"/>
    <property type="evidence" value="ECO:0007669"/>
    <property type="project" value="UniProtKB-UniRule"/>
</dbReference>
<dbReference type="GO" id="GO:0004140">
    <property type="term" value="F:dephospho-CoA kinase activity"/>
    <property type="evidence" value="ECO:0007669"/>
    <property type="project" value="UniProtKB-UniRule"/>
</dbReference>
<dbReference type="GO" id="GO:0015937">
    <property type="term" value="P:coenzyme A biosynthetic process"/>
    <property type="evidence" value="ECO:0007669"/>
    <property type="project" value="UniProtKB-UniRule"/>
</dbReference>
<dbReference type="CDD" id="cd02022">
    <property type="entry name" value="DPCK"/>
    <property type="match status" value="1"/>
</dbReference>
<dbReference type="Gene3D" id="3.40.50.300">
    <property type="entry name" value="P-loop containing nucleotide triphosphate hydrolases"/>
    <property type="match status" value="1"/>
</dbReference>
<dbReference type="HAMAP" id="MF_00376">
    <property type="entry name" value="Dephospho_CoA_kinase"/>
    <property type="match status" value="1"/>
</dbReference>
<dbReference type="InterPro" id="IPR001977">
    <property type="entry name" value="Depp_CoAkinase"/>
</dbReference>
<dbReference type="InterPro" id="IPR027417">
    <property type="entry name" value="P-loop_NTPase"/>
</dbReference>
<dbReference type="NCBIfam" id="TIGR00152">
    <property type="entry name" value="dephospho-CoA kinase"/>
    <property type="match status" value="1"/>
</dbReference>
<dbReference type="PANTHER" id="PTHR10695:SF46">
    <property type="entry name" value="BIFUNCTIONAL COENZYME A SYNTHASE-RELATED"/>
    <property type="match status" value="1"/>
</dbReference>
<dbReference type="PANTHER" id="PTHR10695">
    <property type="entry name" value="DEPHOSPHO-COA KINASE-RELATED"/>
    <property type="match status" value="1"/>
</dbReference>
<dbReference type="Pfam" id="PF01121">
    <property type="entry name" value="CoaE"/>
    <property type="match status" value="1"/>
</dbReference>
<dbReference type="SUPFAM" id="SSF52540">
    <property type="entry name" value="P-loop containing nucleoside triphosphate hydrolases"/>
    <property type="match status" value="1"/>
</dbReference>
<dbReference type="PROSITE" id="PS51219">
    <property type="entry name" value="DPCK"/>
    <property type="match status" value="1"/>
</dbReference>